<feature type="chain" id="PRO_0000446104" description="Urocanate reductase">
    <location>
        <begin position="1"/>
        <end position="803"/>
    </location>
</feature>
<feature type="active site" description="Proton donor" evidence="2">
    <location>
        <position position="632"/>
    </location>
</feature>
<feature type="binding site" evidence="3">
    <location>
        <position position="311"/>
    </location>
    <ligand>
        <name>FAD</name>
        <dbReference type="ChEBI" id="CHEBI:57692"/>
    </ligand>
</feature>
<feature type="binding site" evidence="3">
    <location>
        <position position="330"/>
    </location>
    <ligand>
        <name>FAD</name>
        <dbReference type="ChEBI" id="CHEBI:57692"/>
    </ligand>
</feature>
<feature type="binding site" evidence="3">
    <location>
        <position position="338"/>
    </location>
    <ligand>
        <name>FAD</name>
        <dbReference type="ChEBI" id="CHEBI:57692"/>
    </ligand>
</feature>
<feature type="binding site" evidence="3">
    <location>
        <position position="339"/>
    </location>
    <ligand>
        <name>FAD</name>
        <dbReference type="ChEBI" id="CHEBI:57692"/>
    </ligand>
</feature>
<feature type="binding site" evidence="3">
    <location>
        <position position="343"/>
    </location>
    <ligand>
        <name>FAD</name>
        <dbReference type="ChEBI" id="CHEBI:57692"/>
    </ligand>
</feature>
<feature type="binding site" evidence="3">
    <location>
        <position position="344"/>
    </location>
    <ligand>
        <name>FAD</name>
        <dbReference type="ChEBI" id="CHEBI:57692"/>
    </ligand>
</feature>
<feature type="binding site" evidence="3">
    <location>
        <position position="573"/>
    </location>
    <ligand>
        <name>FAD</name>
        <dbReference type="ChEBI" id="CHEBI:57692"/>
    </ligand>
</feature>
<feature type="binding site" evidence="3">
    <location>
        <position position="739"/>
    </location>
    <ligand>
        <name>FAD</name>
        <dbReference type="ChEBI" id="CHEBI:57692"/>
    </ligand>
</feature>
<feature type="binding site" evidence="3">
    <location>
        <position position="768"/>
    </location>
    <ligand>
        <name>FAD</name>
        <dbReference type="ChEBI" id="CHEBI:57692"/>
    </ligand>
</feature>
<feature type="binding site" evidence="3">
    <location>
        <position position="783"/>
    </location>
    <ligand>
        <name>FAD</name>
        <dbReference type="ChEBI" id="CHEBI:57692"/>
    </ligand>
</feature>
<feature type="binding site" evidence="3">
    <location>
        <position position="784"/>
    </location>
    <ligand>
        <name>FAD</name>
        <dbReference type="ChEBI" id="CHEBI:57692"/>
    </ligand>
</feature>
<feature type="modified residue" description="FMN phosphoryl serine" evidence="1">
    <location>
        <position position="258"/>
    </location>
</feature>
<organism>
    <name type="scientific">Streptococcus mutans serotype c (strain ATCC 700610 / UA159)</name>
    <dbReference type="NCBI Taxonomy" id="210007"/>
    <lineage>
        <taxon>Bacteria</taxon>
        <taxon>Bacillati</taxon>
        <taxon>Bacillota</taxon>
        <taxon>Bacilli</taxon>
        <taxon>Lactobacillales</taxon>
        <taxon>Streptococcaceae</taxon>
        <taxon>Streptococcus</taxon>
    </lineage>
</organism>
<gene>
    <name evidence="5" type="primary">urdA</name>
    <name evidence="8" type="ordered locus">SMU_180</name>
</gene>
<name>URDA_STRMU</name>
<comment type="function">
    <text evidence="7">Catalyzes the two-electron reduction of urocanate to dihydrourocanate (also named imidazole propionate or deamino-histidine). Dihydrourocanate is present at higher concentrations in subjects with type 2 diabetes, and directly impairs glucose tolerance and insulin signaling at the level of insulin receptor substrate (IRS) through activation of p38 gamma (MAPK12)-p62-mTORC1. Therefore, the UrdA enzyme from the gut bacteria S.mutans strain UA159 may contribute to the pathogenesis of type 2 diabetes by producing the microbial metabolite dihydrourocanate.</text>
</comment>
<comment type="catalytic activity">
    <reaction evidence="4 7">
        <text>dihydrourocanate + A = urocanate + AH2</text>
        <dbReference type="Rhea" id="RHEA:36059"/>
        <dbReference type="ChEBI" id="CHEBI:13193"/>
        <dbReference type="ChEBI" id="CHEBI:17499"/>
        <dbReference type="ChEBI" id="CHEBI:27247"/>
        <dbReference type="ChEBI" id="CHEBI:72991"/>
        <dbReference type="EC" id="1.3.99.33"/>
    </reaction>
</comment>
<comment type="cofactor">
    <cofactor evidence="4">
        <name>FAD</name>
        <dbReference type="ChEBI" id="CHEBI:57692"/>
    </cofactor>
    <text evidence="4">Binds 1 FAD per subunit.</text>
</comment>
<comment type="cofactor">
    <cofactor evidence="1">
        <name>FMN</name>
        <dbReference type="ChEBI" id="CHEBI:58210"/>
    </cofactor>
    <text evidence="1">Binds 2 FMN per subunit, one is bound covalently and the other non-covalently.</text>
</comment>
<comment type="miscellaneous">
    <text evidence="7">S.mutans strain UA159 is significantly more abundant in subjects with type 2 diabetes (T2D) compared with subjects with normal glucose tolerance (NGT).</text>
</comment>
<comment type="similarity">
    <text evidence="6">Belongs to the FAD-dependent oxidoreductase 2 family. FRD/SDH subfamily.</text>
</comment>
<reference key="1">
    <citation type="journal article" date="2002" name="Proc. Natl. Acad. Sci. U.S.A.">
        <title>Genome sequence of Streptococcus mutans UA159, a cariogenic dental pathogen.</title>
        <authorList>
            <person name="Ajdic D.J."/>
            <person name="McShan W.M."/>
            <person name="McLaughlin R.E."/>
            <person name="Savic G."/>
            <person name="Chang J."/>
            <person name="Carson M.B."/>
            <person name="Primeaux C."/>
            <person name="Tian R."/>
            <person name="Kenton S."/>
            <person name="Jia H.G."/>
            <person name="Lin S.P."/>
            <person name="Qian Y."/>
            <person name="Li S."/>
            <person name="Zhu H."/>
            <person name="Najar F.Z."/>
            <person name="Lai H."/>
            <person name="White J."/>
            <person name="Roe B.A."/>
            <person name="Ferretti J.J."/>
        </authorList>
    </citation>
    <scope>NUCLEOTIDE SEQUENCE [LARGE SCALE GENOMIC DNA]</scope>
    <source>
        <strain>ATCC 700610 / UA159</strain>
    </source>
</reference>
<reference key="2">
    <citation type="journal article" date="2018" name="Cell">
        <title>Microbially produced imidazole propionate impairs insulin signaling through mTORC1.</title>
        <authorList>
            <person name="Koh A."/>
            <person name="Molinaro A."/>
            <person name="Staahlman M."/>
            <person name="Khan M.T."/>
            <person name="Schmidt C."/>
            <person name="Manneraas-Holm L."/>
            <person name="Wu H."/>
            <person name="Carreras A."/>
            <person name="Jeong H."/>
            <person name="Olofsson L.E."/>
            <person name="Bergh P.O."/>
            <person name="Gerdes V."/>
            <person name="Hartstra A."/>
            <person name="de Brauw M."/>
            <person name="Perkins R."/>
            <person name="Nieuwdorp M."/>
            <person name="Bergstroem G."/>
            <person name="Baeckhed F."/>
        </authorList>
    </citation>
    <scope>PREDICTED FUNCTION</scope>
    <scope>CATALYTIC ACTIVITY</scope>
    <source>
        <strain>ATCC 700610 / UA159</strain>
    </source>
</reference>
<sequence>MKLIAIVGTNAKQSYNRILLQFMKRHFVQKADIDIMEIANVPMFNETEDQTDLPAIQNFNTKISQADGVIIATPEHNHTIPSSLNSLLEWLSFKVHPLDGKPLMIVGASYDVQGSSRAQLHLRQILDAPGVNAAVMPGSEFLLGRAHQAFDEAGNLKSEATVDFLESCFFKFLRFVQVANQLNEPEEVSFEAGTYQVTTQGHNGKLPMTVTLSEEKIEKIDIDSSGESSGIADIVFTRIPNEILEGQTLNVDAVSGASVTSNGVLDGVARAIKLAGGNPDVLRKRPKAPSALDKEDKTYSTDVVIVGGGGAGLAAAARVLQAGKQVMVLEKFPALGGNTVRSGGLLNAADPEWQKTFPANPGEAHNLSELIQTDEDSIAAEYLADFKELKQQVTNYLKDPSYLFDSNILHRIQTYIGGKRTDRNGCEVYGNYDLVKVLTDKDLDSVHWLADIGVDFDRSEVSMPVGALWRRSHKPKQPMGYAFIEALDTYIRKNSGTILTDTAVTDFILENGLIKGVLAKGRNGQTITVHAQAVVLASGGFGANTKMLQQYNTYWSNIDDNIQTTNSPAITGDGIRLGQSIGAALVGMGFSQMMPVSDPNTGAIFSGLQVPPANFVMVNQEGKRFVDEYGSRDTLSKAAIDNGGLFYLIADENIKATAMNTSNEKIEEQVAAGTLYRADTLESLAEQIGVDPATLVETINNYNSYVEAGYDPEFDKGAFDLKVEKAPFYATPRKPATHHTMGGLKIDTQAHVIKEDGNKIPSLYAAGEVTGGIHAGNRLGGNALADIFTFGRIAAETAVTECC</sequence>
<protein>
    <recommendedName>
        <fullName evidence="5">Urocanate reductase</fullName>
        <ecNumber evidence="4 7">1.3.99.33</ecNumber>
    </recommendedName>
</protein>
<dbReference type="EC" id="1.3.99.33" evidence="4 7"/>
<dbReference type="EMBL" id="AE014133">
    <property type="protein sequence ID" value="AAN57955.1"/>
    <property type="molecule type" value="Genomic_DNA"/>
</dbReference>
<dbReference type="RefSeq" id="NP_720649.1">
    <property type="nucleotide sequence ID" value="NC_004350.2"/>
</dbReference>
<dbReference type="RefSeq" id="WP_002262027.1">
    <property type="nucleotide sequence ID" value="NC_004350.2"/>
</dbReference>
<dbReference type="SMR" id="Q8DW88"/>
<dbReference type="STRING" id="210007.SMU_180"/>
<dbReference type="DNASU" id="1029753"/>
<dbReference type="KEGG" id="smu:SMU_180"/>
<dbReference type="PATRIC" id="fig|210007.7.peg.156"/>
<dbReference type="eggNOG" id="COG0431">
    <property type="taxonomic scope" value="Bacteria"/>
</dbReference>
<dbReference type="eggNOG" id="COG1053">
    <property type="taxonomic scope" value="Bacteria"/>
</dbReference>
<dbReference type="eggNOG" id="COG3976">
    <property type="taxonomic scope" value="Bacteria"/>
</dbReference>
<dbReference type="HOGENOM" id="CLU_011398_4_0_9"/>
<dbReference type="OrthoDB" id="9806724at2"/>
<dbReference type="PhylomeDB" id="Q8DW88"/>
<dbReference type="Proteomes" id="UP000002512">
    <property type="component" value="Chromosome"/>
</dbReference>
<dbReference type="GO" id="GO:0016020">
    <property type="term" value="C:membrane"/>
    <property type="evidence" value="ECO:0007669"/>
    <property type="project" value="InterPro"/>
</dbReference>
<dbReference type="GO" id="GO:0010181">
    <property type="term" value="F:FMN binding"/>
    <property type="evidence" value="ECO:0007669"/>
    <property type="project" value="InterPro"/>
</dbReference>
<dbReference type="GO" id="GO:0033765">
    <property type="term" value="F:steroid dehydrogenase activity, acting on the CH-CH group of donors"/>
    <property type="evidence" value="ECO:0007669"/>
    <property type="project" value="UniProtKB-ARBA"/>
</dbReference>
<dbReference type="Gene3D" id="3.40.50.360">
    <property type="match status" value="1"/>
</dbReference>
<dbReference type="Gene3D" id="3.90.1010.20">
    <property type="match status" value="1"/>
</dbReference>
<dbReference type="Gene3D" id="3.50.50.60">
    <property type="entry name" value="FAD/NAD(P)-binding domain"/>
    <property type="match status" value="2"/>
</dbReference>
<dbReference type="Gene3D" id="3.90.700.10">
    <property type="entry name" value="Succinate dehydrogenase/fumarate reductase flavoprotein, catalytic domain"/>
    <property type="match status" value="1"/>
</dbReference>
<dbReference type="InterPro" id="IPR003953">
    <property type="entry name" value="FAD-dep_OxRdtase_2_FAD-bd"/>
</dbReference>
<dbReference type="InterPro" id="IPR050315">
    <property type="entry name" value="FAD-oxidoreductase_2"/>
</dbReference>
<dbReference type="InterPro" id="IPR036188">
    <property type="entry name" value="FAD/NAD-bd_sf"/>
</dbReference>
<dbReference type="InterPro" id="IPR010960">
    <property type="entry name" value="Flavocytochrome_c"/>
</dbReference>
<dbReference type="InterPro" id="IPR029039">
    <property type="entry name" value="Flavoprotein-like_sf"/>
</dbReference>
<dbReference type="InterPro" id="IPR007329">
    <property type="entry name" value="FMN-bd"/>
</dbReference>
<dbReference type="InterPro" id="IPR005025">
    <property type="entry name" value="FMN_Rdtase-like_dom"/>
</dbReference>
<dbReference type="InterPro" id="IPR027477">
    <property type="entry name" value="Succ_DH/fumarate_Rdtase_cat_sf"/>
</dbReference>
<dbReference type="NCBIfam" id="TIGR01813">
    <property type="entry name" value="flavo_cyto_c"/>
    <property type="match status" value="1"/>
</dbReference>
<dbReference type="PANTHER" id="PTHR43400:SF7">
    <property type="entry name" value="FAD-DEPENDENT OXIDOREDUCTASE 2 FAD BINDING DOMAIN-CONTAINING PROTEIN"/>
    <property type="match status" value="1"/>
</dbReference>
<dbReference type="PANTHER" id="PTHR43400">
    <property type="entry name" value="FUMARATE REDUCTASE"/>
    <property type="match status" value="1"/>
</dbReference>
<dbReference type="Pfam" id="PF00890">
    <property type="entry name" value="FAD_binding_2"/>
    <property type="match status" value="1"/>
</dbReference>
<dbReference type="Pfam" id="PF04205">
    <property type="entry name" value="FMN_bind"/>
    <property type="match status" value="1"/>
</dbReference>
<dbReference type="Pfam" id="PF03358">
    <property type="entry name" value="FMN_red"/>
    <property type="match status" value="1"/>
</dbReference>
<dbReference type="SMART" id="SM00900">
    <property type="entry name" value="FMN_bind"/>
    <property type="match status" value="1"/>
</dbReference>
<dbReference type="SUPFAM" id="SSF51905">
    <property type="entry name" value="FAD/NAD(P)-binding domain"/>
    <property type="match status" value="1"/>
</dbReference>
<dbReference type="SUPFAM" id="SSF52218">
    <property type="entry name" value="Flavoproteins"/>
    <property type="match status" value="1"/>
</dbReference>
<dbReference type="SUPFAM" id="SSF56425">
    <property type="entry name" value="Succinate dehydrogenase/fumarate reductase flavoprotein, catalytic domain"/>
    <property type="match status" value="1"/>
</dbReference>
<keyword id="KW-0274">FAD</keyword>
<keyword id="KW-0285">Flavoprotein</keyword>
<keyword id="KW-0288">FMN</keyword>
<keyword id="KW-0560">Oxidoreductase</keyword>
<keyword id="KW-0597">Phosphoprotein</keyword>
<keyword id="KW-1185">Reference proteome</keyword>
<evidence type="ECO:0000250" key="1">
    <source>
        <dbReference type="UniProtKB" id="A0A1R4LHH9"/>
    </source>
</evidence>
<evidence type="ECO:0000250" key="2">
    <source>
        <dbReference type="UniProtKB" id="P0C278"/>
    </source>
</evidence>
<evidence type="ECO:0000250" key="3">
    <source>
        <dbReference type="UniProtKB" id="P83223"/>
    </source>
</evidence>
<evidence type="ECO:0000250" key="4">
    <source>
        <dbReference type="UniProtKB" id="Q8CVD0"/>
    </source>
</evidence>
<evidence type="ECO:0000303" key="5">
    <source>
    </source>
</evidence>
<evidence type="ECO:0000305" key="6"/>
<evidence type="ECO:0000305" key="7">
    <source>
    </source>
</evidence>
<evidence type="ECO:0000312" key="8">
    <source>
        <dbReference type="EMBL" id="AAN57955.1"/>
    </source>
</evidence>
<proteinExistence type="evidence at protein level"/>
<accession>Q8DW88</accession>